<keyword id="KW-0025">Alternative splicing</keyword>
<keyword id="KW-0378">Hydrolase</keyword>
<keyword id="KW-0472">Membrane</keyword>
<keyword id="KW-0496">Mitochondrion</keyword>
<keyword id="KW-0999">Mitochondrion inner membrane</keyword>
<keyword id="KW-0539">Nucleus</keyword>
<keyword id="KW-0597">Phosphoprotein</keyword>
<keyword id="KW-0645">Protease</keyword>
<keyword id="KW-1185">Reference proteome</keyword>
<keyword id="KW-0720">Serine protease</keyword>
<keyword id="KW-0809">Transit peptide</keyword>
<keyword id="KW-0812">Transmembrane</keyword>
<keyword id="KW-1133">Transmembrane helix</keyword>
<feature type="transit peptide" description="Mitochondrion" evidence="3">
    <location>
        <begin position="1"/>
        <end position="50"/>
    </location>
</feature>
<feature type="chain" id="PRO_0000257987" description="Presenilin-associated rhomboid-like protein, mitochondrial">
    <location>
        <begin position="51"/>
        <end position="377"/>
    </location>
</feature>
<feature type="peptide" id="PRO_0000257988" description="P-beta" evidence="3">
    <location>
        <begin position="51"/>
        <end position="75"/>
    </location>
</feature>
<feature type="topological domain" description="Mitochondrial matrix" evidence="4">
    <location>
        <begin position="51"/>
        <end position="95"/>
    </location>
</feature>
<feature type="transmembrane region" description="Helical" evidence="4">
    <location>
        <begin position="96"/>
        <end position="116"/>
    </location>
</feature>
<feature type="topological domain" description="Mitochondrial intermembrane" evidence="4">
    <location>
        <begin position="117"/>
        <end position="165"/>
    </location>
</feature>
<feature type="transmembrane region" description="Helical" evidence="4">
    <location>
        <begin position="166"/>
        <end position="186"/>
    </location>
</feature>
<feature type="topological domain" description="Mitochondrial matrix" evidence="4">
    <location>
        <begin position="187"/>
        <end position="214"/>
    </location>
</feature>
<feature type="transmembrane region" description="Helical" evidence="4">
    <location>
        <begin position="215"/>
        <end position="235"/>
    </location>
</feature>
<feature type="topological domain" description="Mitochondrial intermembrane" evidence="4">
    <location>
        <begin position="236"/>
        <end position="242"/>
    </location>
</feature>
<feature type="transmembrane region" description="Helical" evidence="4">
    <location>
        <begin position="243"/>
        <end position="263"/>
    </location>
</feature>
<feature type="topological domain" description="Mitochondrial matrix" evidence="4">
    <location>
        <begin position="264"/>
        <end position="268"/>
    </location>
</feature>
<feature type="transmembrane region" description="Helical" evidence="4">
    <location>
        <begin position="269"/>
        <end position="289"/>
    </location>
</feature>
<feature type="topological domain" description="Mitochondrial intermembrane" evidence="4">
    <location>
        <begin position="290"/>
        <end position="293"/>
    </location>
</feature>
<feature type="transmembrane region" description="Helical" evidence="4">
    <location>
        <begin position="294"/>
        <end position="314"/>
    </location>
</feature>
<feature type="topological domain" description="Mitochondrial matrix" evidence="4">
    <location>
        <begin position="315"/>
        <end position="331"/>
    </location>
</feature>
<feature type="transmembrane region" description="Helical" evidence="4">
    <location>
        <begin position="332"/>
        <end position="352"/>
    </location>
</feature>
<feature type="topological domain" description="Mitochondrial intermembrane" evidence="4">
    <location>
        <begin position="353"/>
        <end position="377"/>
    </location>
</feature>
<feature type="active site" description="Nucleophile" evidence="1">
    <location>
        <position position="275"/>
    </location>
</feature>
<feature type="active site" evidence="1">
    <location>
        <position position="333"/>
    </location>
</feature>
<feature type="modified residue" description="Phosphoserine" evidence="3">
    <location>
        <position position="63"/>
    </location>
</feature>
<feature type="modified residue" description="Phosphoserine" evidence="3">
    <location>
        <position position="68"/>
    </location>
</feature>
<feature type="splice variant" id="VSP_052185" description="In isoform 2." evidence="6">
    <location>
        <begin position="93"/>
        <end position="105"/>
    </location>
</feature>
<protein>
    <recommendedName>
        <fullName>Presenilin-associated rhomboid-like protein, mitochondrial</fullName>
        <ecNumber evidence="3">3.4.21.105</ecNumber>
    </recommendedName>
    <alternativeName>
        <fullName>Mitochondrial intramembrane-cleaving protease PARL</fullName>
    </alternativeName>
    <component>
        <recommendedName>
            <fullName>P-beta</fullName>
            <shortName>Pbeta</shortName>
        </recommendedName>
    </component>
</protein>
<accession>Q3B8P0</accession>
<accession>Q5I0L2</accession>
<organism>
    <name type="scientific">Rattus norvegicus</name>
    <name type="common">Rat</name>
    <dbReference type="NCBI Taxonomy" id="10116"/>
    <lineage>
        <taxon>Eukaryota</taxon>
        <taxon>Metazoa</taxon>
        <taxon>Chordata</taxon>
        <taxon>Craniata</taxon>
        <taxon>Vertebrata</taxon>
        <taxon>Euteleostomi</taxon>
        <taxon>Mammalia</taxon>
        <taxon>Eutheria</taxon>
        <taxon>Euarchontoglires</taxon>
        <taxon>Glires</taxon>
        <taxon>Rodentia</taxon>
        <taxon>Myomorpha</taxon>
        <taxon>Muroidea</taxon>
        <taxon>Muridae</taxon>
        <taxon>Murinae</taxon>
        <taxon>Rattus</taxon>
    </lineage>
</organism>
<gene>
    <name evidence="3" type="primary">Parl</name>
    <name evidence="10" type="synonym">Psarl</name>
</gene>
<proteinExistence type="evidence at transcript level"/>
<dbReference type="EC" id="3.4.21.105" evidence="3"/>
<dbReference type="EMBL" id="BC088226">
    <property type="protein sequence ID" value="AAH88226.1"/>
    <property type="molecule type" value="mRNA"/>
</dbReference>
<dbReference type="EMBL" id="BC105907">
    <property type="protein sequence ID" value="AAI05908.1"/>
    <property type="molecule type" value="mRNA"/>
</dbReference>
<dbReference type="RefSeq" id="NP_001030326.1">
    <molecule id="Q3B8P0-1"/>
    <property type="nucleotide sequence ID" value="NM_001035249.1"/>
</dbReference>
<dbReference type="SMR" id="Q3B8P0"/>
<dbReference type="FunCoup" id="Q3B8P0">
    <property type="interactions" value="3698"/>
</dbReference>
<dbReference type="STRING" id="10116.ENSRNOP00000029124"/>
<dbReference type="iPTMnet" id="Q3B8P0"/>
<dbReference type="PhosphoSitePlus" id="Q3B8P0"/>
<dbReference type="PaxDb" id="10116-ENSRNOP00000029124"/>
<dbReference type="GeneID" id="287979"/>
<dbReference type="KEGG" id="rno:287979"/>
<dbReference type="AGR" id="RGD:1306191"/>
<dbReference type="CTD" id="55486"/>
<dbReference type="RGD" id="1306191">
    <property type="gene designation" value="Parl"/>
</dbReference>
<dbReference type="eggNOG" id="KOG2980">
    <property type="taxonomic scope" value="Eukaryota"/>
</dbReference>
<dbReference type="InParanoid" id="Q3B8P0"/>
<dbReference type="OrthoDB" id="10260614at2759"/>
<dbReference type="PhylomeDB" id="Q3B8P0"/>
<dbReference type="Reactome" id="R-RNO-8949664">
    <property type="pathway name" value="Processing of SMDT1"/>
</dbReference>
<dbReference type="PRO" id="PR:Q3B8P0"/>
<dbReference type="Proteomes" id="UP000002494">
    <property type="component" value="Unplaced"/>
</dbReference>
<dbReference type="GO" id="GO:0005743">
    <property type="term" value="C:mitochondrial inner membrane"/>
    <property type="evidence" value="ECO:0000250"/>
    <property type="project" value="ParkinsonsUK-UCL"/>
</dbReference>
<dbReference type="GO" id="GO:0005739">
    <property type="term" value="C:mitochondrion"/>
    <property type="evidence" value="ECO:0000266"/>
    <property type="project" value="RGD"/>
</dbReference>
<dbReference type="GO" id="GO:0005634">
    <property type="term" value="C:nucleus"/>
    <property type="evidence" value="ECO:0007669"/>
    <property type="project" value="UniProtKB-SubCell"/>
</dbReference>
<dbReference type="GO" id="GO:0004175">
    <property type="term" value="F:endopeptidase activity"/>
    <property type="evidence" value="ECO:0000250"/>
    <property type="project" value="ParkinsonsUK-UCL"/>
</dbReference>
<dbReference type="GO" id="GO:0004252">
    <property type="term" value="F:serine-type endopeptidase activity"/>
    <property type="evidence" value="ECO:0000250"/>
    <property type="project" value="UniProtKB"/>
</dbReference>
<dbReference type="GO" id="GO:0033619">
    <property type="term" value="P:membrane protein proteolysis"/>
    <property type="evidence" value="ECO:0000266"/>
    <property type="project" value="RGD"/>
</dbReference>
<dbReference type="GO" id="GO:0008053">
    <property type="term" value="P:mitochondrial fusion"/>
    <property type="evidence" value="ECO:0000266"/>
    <property type="project" value="RGD"/>
</dbReference>
<dbReference type="GO" id="GO:2001243">
    <property type="term" value="P:negative regulation of intrinsic apoptotic signaling pathway"/>
    <property type="evidence" value="ECO:0000250"/>
    <property type="project" value="ParkinsonsUK-UCL"/>
</dbReference>
<dbReference type="GO" id="GO:0090201">
    <property type="term" value="P:negative regulation of release of cytochrome c from mitochondria"/>
    <property type="evidence" value="ECO:0000250"/>
    <property type="project" value="ParkinsonsUK-UCL"/>
</dbReference>
<dbReference type="GO" id="GO:0030182">
    <property type="term" value="P:neuron differentiation"/>
    <property type="evidence" value="ECO:0000270"/>
    <property type="project" value="RGD"/>
</dbReference>
<dbReference type="GO" id="GO:0016485">
    <property type="term" value="P:protein processing"/>
    <property type="evidence" value="ECO:0000250"/>
    <property type="project" value="UniProtKB"/>
</dbReference>
<dbReference type="GO" id="GO:0006508">
    <property type="term" value="P:proteolysis"/>
    <property type="evidence" value="ECO:0000250"/>
    <property type="project" value="ParkinsonsUK-UCL"/>
</dbReference>
<dbReference type="GO" id="GO:0010821">
    <property type="term" value="P:regulation of mitochondrion organization"/>
    <property type="evidence" value="ECO:0000266"/>
    <property type="project" value="RGD"/>
</dbReference>
<dbReference type="GO" id="GO:1901524">
    <property type="term" value="P:regulation of mitophagy"/>
    <property type="evidence" value="ECO:0000266"/>
    <property type="project" value="RGD"/>
</dbReference>
<dbReference type="GO" id="GO:1903214">
    <property type="term" value="P:regulation of protein targeting to mitochondrion"/>
    <property type="evidence" value="ECO:0000266"/>
    <property type="project" value="RGD"/>
</dbReference>
<dbReference type="GO" id="GO:0030162">
    <property type="term" value="P:regulation of proteolysis"/>
    <property type="evidence" value="ECO:0000266"/>
    <property type="project" value="RGD"/>
</dbReference>
<dbReference type="GO" id="GO:2000377">
    <property type="term" value="P:regulation of reactive oxygen species metabolic process"/>
    <property type="evidence" value="ECO:0000250"/>
    <property type="project" value="ParkinsonsUK-UCL"/>
</dbReference>
<dbReference type="GO" id="GO:0031667">
    <property type="term" value="P:response to nutrient levels"/>
    <property type="evidence" value="ECO:0000270"/>
    <property type="project" value="RGD"/>
</dbReference>
<dbReference type="GO" id="GO:0006465">
    <property type="term" value="P:signal peptide processing"/>
    <property type="evidence" value="ECO:0000318"/>
    <property type="project" value="GO_Central"/>
</dbReference>
<dbReference type="FunFam" id="1.20.1540.10:FF:000005">
    <property type="entry name" value="Presenilins-associated rhomboid-like protein, mitochondrial"/>
    <property type="match status" value="1"/>
</dbReference>
<dbReference type="Gene3D" id="1.20.1540.10">
    <property type="entry name" value="Rhomboid-like"/>
    <property type="match status" value="1"/>
</dbReference>
<dbReference type="InterPro" id="IPR022764">
    <property type="entry name" value="Peptidase_S54_rhomboid_dom"/>
</dbReference>
<dbReference type="InterPro" id="IPR035952">
    <property type="entry name" value="Rhomboid-like_sf"/>
</dbReference>
<dbReference type="InterPro" id="IPR050925">
    <property type="entry name" value="Rhomboid_protease_S54"/>
</dbReference>
<dbReference type="PANTHER" id="PTHR43731:SF14">
    <property type="entry name" value="PRESENILIN-ASSOCIATED RHOMBOID-LIKE PROTEIN, MITOCHONDRIAL"/>
    <property type="match status" value="1"/>
</dbReference>
<dbReference type="PANTHER" id="PTHR43731">
    <property type="entry name" value="RHOMBOID PROTEASE"/>
    <property type="match status" value="1"/>
</dbReference>
<dbReference type="Pfam" id="PF01694">
    <property type="entry name" value="Rhomboid"/>
    <property type="match status" value="1"/>
</dbReference>
<dbReference type="SUPFAM" id="SSF144091">
    <property type="entry name" value="Rhomboid-like"/>
    <property type="match status" value="1"/>
</dbReference>
<comment type="function">
    <text evidence="2 3">Required for the control of apoptosis during postnatal growth. Essential for proteolytic processing of an antiapoptotic form of OPA1 which prevents the release of mitochondrial cytochrome c in response to intrinsic apoptotic signals. Required for the maturation of PINK1 into its 52kDa mature form after its cleavage by mitochondrial-processing peptidase (MPP). Promotes cleavage of serine/threonine-protein phosphatase PGAM5 in damaged mitochondria in response to loss of mitochondrial membrane potential. Mediates differential cleavage of PINK1 and PGAM5 depending on the health status of mitochondria, disassociating from PINK1 and associating with PGAM5 in response to mitochondrial membrane potential loss. Required for processing of CLPB into a form with higher protein disaggregase activity by removing an autoinhibitory N-terminal peptide. Promotes processing of DIABLO/SMAC in the mitochondrion which is required for DIABLO apoptotic activity. Also required for cleavage of STARD7 and TTC19. Promotes changes in mitochondria morphology regulated by phosphorylation of P-beta domain.</text>
</comment>
<comment type="catalytic activity">
    <reaction evidence="3">
        <text>Cleaves type-1 transmembrane domains using a catalytic dyad composed of serine and histidine that are contributed by different transmembrane domains.</text>
        <dbReference type="EC" id="3.4.21.105"/>
    </reaction>
</comment>
<comment type="subunit">
    <text evidence="2 3">Interacts with PSEN1 and PSEN2. Binds OPA1 (By similarity).</text>
</comment>
<comment type="subcellular location">
    <subcellularLocation>
        <location evidence="3">Mitochondrion inner membrane</location>
        <topology evidence="3">Multi-pass membrane protein</topology>
    </subcellularLocation>
</comment>
<comment type="subcellular location">
    <molecule>P-beta</molecule>
    <subcellularLocation>
        <location evidence="3">Nucleus</location>
    </subcellularLocation>
    <text evidence="3">Translocated into the nucleus by an unknown mechanism.</text>
</comment>
<comment type="alternative products">
    <event type="alternative splicing"/>
    <isoform>
        <id>Q3B8P0-1</id>
        <name evidence="5">1</name>
        <sequence type="displayed"/>
    </isoform>
    <isoform>
        <id>Q3B8P0-2</id>
        <name evidence="5">2</name>
        <sequence type="described" ref="VSP_052185"/>
    </isoform>
</comment>
<comment type="PTM">
    <text evidence="3">P-beta is proteolytically processed (beta-cleavage) in a PARL-dependent manner.</text>
</comment>
<comment type="similarity">
    <text evidence="4">Belongs to the peptidase S54 family.</text>
</comment>
<name>PARL_RAT</name>
<evidence type="ECO:0000250" key="1"/>
<evidence type="ECO:0000250" key="2">
    <source>
        <dbReference type="UniProtKB" id="Q5XJY4"/>
    </source>
</evidence>
<evidence type="ECO:0000250" key="3">
    <source>
        <dbReference type="UniProtKB" id="Q9H300"/>
    </source>
</evidence>
<evidence type="ECO:0000255" key="4"/>
<evidence type="ECO:0000269" key="5">
    <source>
    </source>
</evidence>
<evidence type="ECO:0000303" key="6">
    <source>
    </source>
</evidence>
<evidence type="ECO:0000305" key="7"/>
<evidence type="ECO:0000312" key="8">
    <source>
        <dbReference type="EMBL" id="AAH88226.1"/>
    </source>
</evidence>
<evidence type="ECO:0000312" key="9">
    <source>
        <dbReference type="EMBL" id="AAI05908.1"/>
    </source>
</evidence>
<evidence type="ECO:0000312" key="10">
    <source>
        <dbReference type="RGD" id="1306191"/>
    </source>
</evidence>
<reference evidence="7 9" key="1">
    <citation type="journal article" date="2004" name="Genome Res.">
        <title>The status, quality, and expansion of the NIH full-length cDNA project: the Mammalian Gene Collection (MGC).</title>
        <authorList>
            <consortium name="The MGC Project Team"/>
        </authorList>
    </citation>
    <scope>NUCLEOTIDE SEQUENCE [LARGE SCALE MRNA] (ISOFORMS 1 AND 2)</scope>
    <source>
        <tissue evidence="8">Liver</tissue>
        <tissue evidence="9">Thymus</tissue>
    </source>
</reference>
<sequence>MALYSWVQRGWRCGQTWAPLLGGGYRELSATQARQLLGRRFNLLLQQKCGFRKAPRKVEPRRSDTGSSGEAYKRSALIPPLEETVFYPSPYPVRTLLKPFFFTVGFTGCAFGSAAIWQYESLKSRVQSYFDGIKADWLDSIRPQKEGNLRKEINKWWNSLSDGQRTVTGIIAANALVFCLWRVPSLHRTMIRYFTSNPASKVLCSPMLLSTFSHFSLFHMAANMYVLWSFSTSIVNILGQEQFVAVYLSAGVISNFVSYVCKVATGRYGPSLGASGAIMTVLAAVCTKIPEGRLAIIFLPVFTFTAGNALKAIIAMDTAGMILGWKFFDHAAHLGGALFGIWYITYGHELIWKNREPLVKIWHEIRTNGPKKGGGSK</sequence>